<keyword id="KW-0560">Oxidoreductase</keyword>
<keyword id="KW-0663">Pyridoxal phosphate</keyword>
<keyword id="KW-1185">Reference proteome</keyword>
<proteinExistence type="inferred from homology"/>
<sequence length="978" mass="105253">MKLEHPDRLMNRTPLSLAALEVHDAFAERHIGPDSADQQAMLEALGFASRAALIDAVIPKTIRRTEPLPLGPFAQPKSEAEALATLRELADRNQVFRSYIGQGYYNAHTPTVILRNVLENPAWYTAYTPYQPEISQGRLEALLNFQQMIVDLTGLAISNASLLDEATAAAEAMTLLQRIGKPKSNVFYVADDVLPQTIEVVKTRATPVGIEVKVGPAADAANANAFGVLLQYPGVNGDVRDYRALAEAIHAAGGHVVVAADLLALTVLTPPGEWGADVAVGNTQRFGVPVGFGGPHAAYLAVRDEFKRQMPGRLVGVTVDAQGNPALRLALQTREQHIRREKATSNVCTAQALLAIMASMYAVYHGPHGLKTIALRVNRIAALLAEGAKQLGYTLVNETFFDTLTFETGARTQALHDAALAKRINLRRVSDTQVGLSVDETTTRRDLADLLEVFAQAAGAKIVPQVDALDSTIAASDTASVPPALERTSAYLTHHVFNRHHSETEMLRYLRSLSDKDLALDRSMIPLGSCTMKLNATSEMLPVTWPEFGQIHPFAPAEQTVGYREMIDQLEAMLVAATGYAAVSLQPNAGSQGEYAGLLIIHAYHASRGEAHRNVCLIPASAHGTNPASAHMAGMQVIVVACDAQGNVDIEDLKKKAEQHADKLAAIMITYPSTHGVFEQNVREICEIVHAHGGQVYVDGANMNAMVGLTAPGQFGGDVSHLNLHKTFCIPHGGGGPGVGPVAVGAHLAQFLPNQISSGYERAPNGIGAVSGAPYGSASILPISWMYIAMMGAKNLTAATETAILNANYVAKKLAPHYPVLYSGPGGLVAHECILDLRPIKETSGITVDDVAKRLADYGFHAPTMSFPVPGTLMVEPTESESKEELDRFIEAMIAIREEIRAVEEGRSDREDNPLKHAPHTAAVVIANDWKHAYARETAAYPLPTLIAKKYWPPVGRADNVYGDRNLFCSCVPIADYE</sequence>
<organism>
    <name type="scientific">Paraburkholderia xenovorans (strain LB400)</name>
    <dbReference type="NCBI Taxonomy" id="266265"/>
    <lineage>
        <taxon>Bacteria</taxon>
        <taxon>Pseudomonadati</taxon>
        <taxon>Pseudomonadota</taxon>
        <taxon>Betaproteobacteria</taxon>
        <taxon>Burkholderiales</taxon>
        <taxon>Burkholderiaceae</taxon>
        <taxon>Paraburkholderia</taxon>
    </lineage>
</organism>
<name>GCSP_PARXL</name>
<gene>
    <name evidence="1" type="primary">gcvP</name>
    <name type="ordered locus">Bxeno_A4335</name>
    <name type="ORF">Bxe_A0054</name>
</gene>
<feature type="chain" id="PRO_1000045578" description="Glycine dehydrogenase (decarboxylating)">
    <location>
        <begin position="1"/>
        <end position="978"/>
    </location>
</feature>
<feature type="modified residue" description="N6-(pyridoxal phosphate)lysine" evidence="1">
    <location>
        <position position="726"/>
    </location>
</feature>
<reference key="1">
    <citation type="journal article" date="2006" name="Proc. Natl. Acad. Sci. U.S.A.">
        <title>Burkholderia xenovorans LB400 harbors a multi-replicon, 9.73-Mbp genome shaped for versatility.</title>
        <authorList>
            <person name="Chain P.S.G."/>
            <person name="Denef V.J."/>
            <person name="Konstantinidis K.T."/>
            <person name="Vergez L.M."/>
            <person name="Agullo L."/>
            <person name="Reyes V.L."/>
            <person name="Hauser L."/>
            <person name="Cordova M."/>
            <person name="Gomez L."/>
            <person name="Gonzalez M."/>
            <person name="Land M."/>
            <person name="Lao V."/>
            <person name="Larimer F."/>
            <person name="LiPuma J.J."/>
            <person name="Mahenthiralingam E."/>
            <person name="Malfatti S.A."/>
            <person name="Marx C.J."/>
            <person name="Parnell J.J."/>
            <person name="Ramette A."/>
            <person name="Richardson P."/>
            <person name="Seeger M."/>
            <person name="Smith D."/>
            <person name="Spilker T."/>
            <person name="Sul W.J."/>
            <person name="Tsoi T.V."/>
            <person name="Ulrich L.E."/>
            <person name="Zhulin I.B."/>
            <person name="Tiedje J.M."/>
        </authorList>
    </citation>
    <scope>NUCLEOTIDE SEQUENCE [LARGE SCALE GENOMIC DNA]</scope>
    <source>
        <strain>LB400</strain>
    </source>
</reference>
<accession>Q13SR6</accession>
<evidence type="ECO:0000255" key="1">
    <source>
        <dbReference type="HAMAP-Rule" id="MF_00711"/>
    </source>
</evidence>
<protein>
    <recommendedName>
        <fullName evidence="1">Glycine dehydrogenase (decarboxylating)</fullName>
        <ecNumber evidence="1">1.4.4.2</ecNumber>
    </recommendedName>
    <alternativeName>
        <fullName evidence="1">Glycine cleavage system P-protein</fullName>
    </alternativeName>
    <alternativeName>
        <fullName evidence="1">Glycine decarboxylase</fullName>
    </alternativeName>
    <alternativeName>
        <fullName evidence="1">Glycine dehydrogenase (aminomethyl-transferring)</fullName>
    </alternativeName>
</protein>
<comment type="function">
    <text evidence="1">The glycine cleavage system catalyzes the degradation of glycine. The P protein binds the alpha-amino group of glycine through its pyridoxal phosphate cofactor; CO(2) is released and the remaining methylamine moiety is then transferred to the lipoamide cofactor of the H protein.</text>
</comment>
<comment type="catalytic activity">
    <reaction evidence="1">
        <text>N(6)-[(R)-lipoyl]-L-lysyl-[glycine-cleavage complex H protein] + glycine + H(+) = N(6)-[(R)-S(8)-aminomethyldihydrolipoyl]-L-lysyl-[glycine-cleavage complex H protein] + CO2</text>
        <dbReference type="Rhea" id="RHEA:24304"/>
        <dbReference type="Rhea" id="RHEA-COMP:10494"/>
        <dbReference type="Rhea" id="RHEA-COMP:10495"/>
        <dbReference type="ChEBI" id="CHEBI:15378"/>
        <dbReference type="ChEBI" id="CHEBI:16526"/>
        <dbReference type="ChEBI" id="CHEBI:57305"/>
        <dbReference type="ChEBI" id="CHEBI:83099"/>
        <dbReference type="ChEBI" id="CHEBI:83143"/>
        <dbReference type="EC" id="1.4.4.2"/>
    </reaction>
</comment>
<comment type="cofactor">
    <cofactor evidence="1">
        <name>pyridoxal 5'-phosphate</name>
        <dbReference type="ChEBI" id="CHEBI:597326"/>
    </cofactor>
</comment>
<comment type="subunit">
    <text evidence="1">The glycine cleavage system is composed of four proteins: P, T, L and H.</text>
</comment>
<comment type="similarity">
    <text evidence="1">Belongs to the GcvP family.</text>
</comment>
<dbReference type="EC" id="1.4.4.2" evidence="1"/>
<dbReference type="EMBL" id="CP000270">
    <property type="protein sequence ID" value="ABE32873.1"/>
    <property type="molecule type" value="Genomic_DNA"/>
</dbReference>
<dbReference type="RefSeq" id="WP_011490275.1">
    <property type="nucleotide sequence ID" value="NC_007951.1"/>
</dbReference>
<dbReference type="SMR" id="Q13SR6"/>
<dbReference type="STRING" id="266265.Bxe_A0054"/>
<dbReference type="KEGG" id="bxb:DR64_2233"/>
<dbReference type="KEGG" id="bxe:Bxe_A0054"/>
<dbReference type="PATRIC" id="fig|266265.5.peg.4557"/>
<dbReference type="eggNOG" id="COG0403">
    <property type="taxonomic scope" value="Bacteria"/>
</dbReference>
<dbReference type="eggNOG" id="COG1003">
    <property type="taxonomic scope" value="Bacteria"/>
</dbReference>
<dbReference type="OrthoDB" id="9801272at2"/>
<dbReference type="Proteomes" id="UP000001817">
    <property type="component" value="Chromosome 1"/>
</dbReference>
<dbReference type="GO" id="GO:0005829">
    <property type="term" value="C:cytosol"/>
    <property type="evidence" value="ECO:0007669"/>
    <property type="project" value="TreeGrafter"/>
</dbReference>
<dbReference type="GO" id="GO:0005960">
    <property type="term" value="C:glycine cleavage complex"/>
    <property type="evidence" value="ECO:0007669"/>
    <property type="project" value="TreeGrafter"/>
</dbReference>
<dbReference type="GO" id="GO:0016594">
    <property type="term" value="F:glycine binding"/>
    <property type="evidence" value="ECO:0007669"/>
    <property type="project" value="TreeGrafter"/>
</dbReference>
<dbReference type="GO" id="GO:0004375">
    <property type="term" value="F:glycine dehydrogenase (decarboxylating) activity"/>
    <property type="evidence" value="ECO:0007669"/>
    <property type="project" value="UniProtKB-EC"/>
</dbReference>
<dbReference type="GO" id="GO:0030170">
    <property type="term" value="F:pyridoxal phosphate binding"/>
    <property type="evidence" value="ECO:0007669"/>
    <property type="project" value="TreeGrafter"/>
</dbReference>
<dbReference type="GO" id="GO:0019464">
    <property type="term" value="P:glycine decarboxylation via glycine cleavage system"/>
    <property type="evidence" value="ECO:0007669"/>
    <property type="project" value="UniProtKB-UniRule"/>
</dbReference>
<dbReference type="CDD" id="cd00613">
    <property type="entry name" value="GDC-P"/>
    <property type="match status" value="2"/>
</dbReference>
<dbReference type="FunFam" id="3.40.640.10:FF:000005">
    <property type="entry name" value="Glycine dehydrogenase (decarboxylating), mitochondrial"/>
    <property type="match status" value="1"/>
</dbReference>
<dbReference type="FunFam" id="3.90.1150.10:FF:000007">
    <property type="entry name" value="Glycine dehydrogenase (decarboxylating), mitochondrial"/>
    <property type="match status" value="1"/>
</dbReference>
<dbReference type="FunFam" id="3.40.640.10:FF:000007">
    <property type="entry name" value="glycine dehydrogenase (Decarboxylating), mitochondrial"/>
    <property type="match status" value="1"/>
</dbReference>
<dbReference type="Gene3D" id="3.90.1150.10">
    <property type="entry name" value="Aspartate Aminotransferase, domain 1"/>
    <property type="match status" value="2"/>
</dbReference>
<dbReference type="Gene3D" id="3.40.640.10">
    <property type="entry name" value="Type I PLP-dependent aspartate aminotransferase-like (Major domain)"/>
    <property type="match status" value="2"/>
</dbReference>
<dbReference type="HAMAP" id="MF_00711">
    <property type="entry name" value="GcvP"/>
    <property type="match status" value="1"/>
</dbReference>
<dbReference type="InterPro" id="IPR003437">
    <property type="entry name" value="GcvP"/>
</dbReference>
<dbReference type="InterPro" id="IPR049316">
    <property type="entry name" value="GDC-P_C"/>
</dbReference>
<dbReference type="InterPro" id="IPR049315">
    <property type="entry name" value="GDC-P_N"/>
</dbReference>
<dbReference type="InterPro" id="IPR020581">
    <property type="entry name" value="GDC_P"/>
</dbReference>
<dbReference type="InterPro" id="IPR015424">
    <property type="entry name" value="PyrdxlP-dep_Trfase"/>
</dbReference>
<dbReference type="InterPro" id="IPR015421">
    <property type="entry name" value="PyrdxlP-dep_Trfase_major"/>
</dbReference>
<dbReference type="InterPro" id="IPR015422">
    <property type="entry name" value="PyrdxlP-dep_Trfase_small"/>
</dbReference>
<dbReference type="NCBIfam" id="TIGR00461">
    <property type="entry name" value="gcvP"/>
    <property type="match status" value="1"/>
</dbReference>
<dbReference type="NCBIfam" id="NF003346">
    <property type="entry name" value="PRK04366.1"/>
    <property type="match status" value="1"/>
</dbReference>
<dbReference type="PANTHER" id="PTHR11773:SF1">
    <property type="entry name" value="GLYCINE DEHYDROGENASE (DECARBOXYLATING), MITOCHONDRIAL"/>
    <property type="match status" value="1"/>
</dbReference>
<dbReference type="PANTHER" id="PTHR11773">
    <property type="entry name" value="GLYCINE DEHYDROGENASE, DECARBOXYLATING"/>
    <property type="match status" value="1"/>
</dbReference>
<dbReference type="Pfam" id="PF21478">
    <property type="entry name" value="GcvP2_C"/>
    <property type="match status" value="1"/>
</dbReference>
<dbReference type="Pfam" id="PF02347">
    <property type="entry name" value="GDC-P"/>
    <property type="match status" value="2"/>
</dbReference>
<dbReference type="SUPFAM" id="SSF53383">
    <property type="entry name" value="PLP-dependent transferases"/>
    <property type="match status" value="2"/>
</dbReference>